<name>RNH2_ANAMM</name>
<dbReference type="EC" id="3.1.26.4" evidence="1"/>
<dbReference type="EMBL" id="CP000030">
    <property type="protein sequence ID" value="AAV86367.1"/>
    <property type="status" value="ALT_INIT"/>
    <property type="molecule type" value="Genomic_DNA"/>
</dbReference>
<dbReference type="RefSeq" id="WP_037348608.1">
    <property type="nucleotide sequence ID" value="NZ_AFMU01000046.1"/>
</dbReference>
<dbReference type="SMR" id="Q5PBG2"/>
<dbReference type="KEGG" id="ama:AM264"/>
<dbReference type="HOGENOM" id="CLU_817951_0_0_5"/>
<dbReference type="GO" id="GO:0005737">
    <property type="term" value="C:cytoplasm"/>
    <property type="evidence" value="ECO:0007669"/>
    <property type="project" value="UniProtKB-SubCell"/>
</dbReference>
<dbReference type="GO" id="GO:0032299">
    <property type="term" value="C:ribonuclease H2 complex"/>
    <property type="evidence" value="ECO:0007669"/>
    <property type="project" value="TreeGrafter"/>
</dbReference>
<dbReference type="GO" id="GO:0030145">
    <property type="term" value="F:manganese ion binding"/>
    <property type="evidence" value="ECO:0007669"/>
    <property type="project" value="UniProtKB-UniRule"/>
</dbReference>
<dbReference type="GO" id="GO:0003723">
    <property type="term" value="F:RNA binding"/>
    <property type="evidence" value="ECO:0007669"/>
    <property type="project" value="InterPro"/>
</dbReference>
<dbReference type="GO" id="GO:0004523">
    <property type="term" value="F:RNA-DNA hybrid ribonuclease activity"/>
    <property type="evidence" value="ECO:0007669"/>
    <property type="project" value="UniProtKB-UniRule"/>
</dbReference>
<dbReference type="GO" id="GO:0043137">
    <property type="term" value="P:DNA replication, removal of RNA primer"/>
    <property type="evidence" value="ECO:0007669"/>
    <property type="project" value="TreeGrafter"/>
</dbReference>
<dbReference type="GO" id="GO:0006298">
    <property type="term" value="P:mismatch repair"/>
    <property type="evidence" value="ECO:0007669"/>
    <property type="project" value="TreeGrafter"/>
</dbReference>
<dbReference type="CDD" id="cd07182">
    <property type="entry name" value="RNase_HII_bacteria_HII_like"/>
    <property type="match status" value="1"/>
</dbReference>
<dbReference type="Gene3D" id="3.30.420.10">
    <property type="entry name" value="Ribonuclease H-like superfamily/Ribonuclease H"/>
    <property type="match status" value="1"/>
</dbReference>
<dbReference type="HAMAP" id="MF_00052_B">
    <property type="entry name" value="RNase_HII_B"/>
    <property type="match status" value="1"/>
</dbReference>
<dbReference type="InterPro" id="IPR022898">
    <property type="entry name" value="RNase_HII"/>
</dbReference>
<dbReference type="InterPro" id="IPR001352">
    <property type="entry name" value="RNase_HII/HIII"/>
</dbReference>
<dbReference type="InterPro" id="IPR024567">
    <property type="entry name" value="RNase_HII/HIII_dom"/>
</dbReference>
<dbReference type="InterPro" id="IPR012337">
    <property type="entry name" value="RNaseH-like_sf"/>
</dbReference>
<dbReference type="InterPro" id="IPR036397">
    <property type="entry name" value="RNaseH_sf"/>
</dbReference>
<dbReference type="NCBIfam" id="NF000595">
    <property type="entry name" value="PRK00015.1-3"/>
    <property type="match status" value="1"/>
</dbReference>
<dbReference type="PANTHER" id="PTHR10954">
    <property type="entry name" value="RIBONUCLEASE H2 SUBUNIT A"/>
    <property type="match status" value="1"/>
</dbReference>
<dbReference type="PANTHER" id="PTHR10954:SF18">
    <property type="entry name" value="RIBONUCLEASE HII"/>
    <property type="match status" value="1"/>
</dbReference>
<dbReference type="Pfam" id="PF01351">
    <property type="entry name" value="RNase_HII"/>
    <property type="match status" value="1"/>
</dbReference>
<dbReference type="SUPFAM" id="SSF53098">
    <property type="entry name" value="Ribonuclease H-like"/>
    <property type="match status" value="1"/>
</dbReference>
<dbReference type="PROSITE" id="PS51975">
    <property type="entry name" value="RNASE_H_2"/>
    <property type="match status" value="1"/>
</dbReference>
<evidence type="ECO:0000255" key="1">
    <source>
        <dbReference type="HAMAP-Rule" id="MF_00052"/>
    </source>
</evidence>
<evidence type="ECO:0000255" key="2">
    <source>
        <dbReference type="PROSITE-ProRule" id="PRU01319"/>
    </source>
</evidence>
<evidence type="ECO:0000256" key="3">
    <source>
        <dbReference type="SAM" id="MobiDB-lite"/>
    </source>
</evidence>
<evidence type="ECO:0000305" key="4"/>
<accession>Q5PBG2</accession>
<protein>
    <recommendedName>
        <fullName evidence="1">Ribonuclease HII</fullName>
        <shortName evidence="1">RNase HII</shortName>
        <ecNumber evidence="1">3.1.26.4</ecNumber>
    </recommendedName>
</protein>
<reference key="1">
    <citation type="journal article" date="2005" name="Proc. Natl. Acad. Sci. U.S.A.">
        <title>Complete genome sequencing of Anaplasma marginale reveals that the surface is skewed to two superfamilies of outer membrane proteins.</title>
        <authorList>
            <person name="Brayton K.A."/>
            <person name="Kappmeyer L.S."/>
            <person name="Herndon D.R."/>
            <person name="Dark M.J."/>
            <person name="Tibbals D.L."/>
            <person name="Palmer G.H."/>
            <person name="McGuire T.C."/>
            <person name="Knowles D.P. Jr."/>
        </authorList>
    </citation>
    <scope>NUCLEOTIDE SEQUENCE [LARGE SCALE GENOMIC DNA]</scope>
    <source>
        <strain>St. Maries</strain>
    </source>
</reference>
<gene>
    <name evidence="1" type="primary">rnhB</name>
    <name type="ordered locus">AM264</name>
</gene>
<feature type="chain" id="PRO_0000235694" description="Ribonuclease HII">
    <location>
        <begin position="1"/>
        <end position="243"/>
    </location>
</feature>
<feature type="domain" description="RNase H type-2" evidence="2">
    <location>
        <begin position="23"/>
        <end position="217"/>
    </location>
</feature>
<feature type="region of interest" description="Disordered" evidence="3">
    <location>
        <begin position="223"/>
        <end position="243"/>
    </location>
</feature>
<feature type="compositionally biased region" description="Basic and acidic residues" evidence="3">
    <location>
        <begin position="232"/>
        <end position="243"/>
    </location>
</feature>
<feature type="binding site" evidence="1">
    <location>
        <position position="29"/>
    </location>
    <ligand>
        <name>a divalent metal cation</name>
        <dbReference type="ChEBI" id="CHEBI:60240"/>
    </ligand>
</feature>
<feature type="binding site" evidence="1">
    <location>
        <position position="30"/>
    </location>
    <ligand>
        <name>a divalent metal cation</name>
        <dbReference type="ChEBI" id="CHEBI:60240"/>
    </ligand>
</feature>
<feature type="binding site" evidence="1">
    <location>
        <position position="122"/>
    </location>
    <ligand>
        <name>a divalent metal cation</name>
        <dbReference type="ChEBI" id="CHEBI:60240"/>
    </ligand>
</feature>
<organism>
    <name type="scientific">Anaplasma marginale (strain St. Maries)</name>
    <dbReference type="NCBI Taxonomy" id="234826"/>
    <lineage>
        <taxon>Bacteria</taxon>
        <taxon>Pseudomonadati</taxon>
        <taxon>Pseudomonadota</taxon>
        <taxon>Alphaproteobacteria</taxon>
        <taxon>Rickettsiales</taxon>
        <taxon>Anaplasmataceae</taxon>
        <taxon>Anaplasma</taxon>
    </lineage>
</organism>
<proteinExistence type="inferred from homology"/>
<sequence>MAGFMNRMPSFLIEDQLRSGTISVIVGVDEVGYGAIAGPVVAAAVYLPERECDYIKDIKDSKALSSKKREELFCKITAHAKYGVGFARVREIEQHNILVASHISMKRALQNLGVKADLVLVDGSRAPAGLPWAVKTIVKGDSISTSIAAASIIAKVTRDRFMRRLHEQYPEYAWNQNCGYGTKAHMQSLKLYGKTAQHRSTFAPVKQLSSECEGAPPEQLELLSSTGIKTPVDGRGDAVATRD</sequence>
<comment type="function">
    <text evidence="1">Endonuclease that specifically degrades the RNA of RNA-DNA hybrids.</text>
</comment>
<comment type="catalytic activity">
    <reaction evidence="1">
        <text>Endonucleolytic cleavage to 5'-phosphomonoester.</text>
        <dbReference type="EC" id="3.1.26.4"/>
    </reaction>
</comment>
<comment type="cofactor">
    <cofactor evidence="1">
        <name>Mn(2+)</name>
        <dbReference type="ChEBI" id="CHEBI:29035"/>
    </cofactor>
    <cofactor evidence="1">
        <name>Mg(2+)</name>
        <dbReference type="ChEBI" id="CHEBI:18420"/>
    </cofactor>
    <text evidence="1">Manganese or magnesium. Binds 1 divalent metal ion per monomer in the absence of substrate. May bind a second metal ion after substrate binding.</text>
</comment>
<comment type="subcellular location">
    <subcellularLocation>
        <location evidence="1">Cytoplasm</location>
    </subcellularLocation>
</comment>
<comment type="similarity">
    <text evidence="1">Belongs to the RNase HII family.</text>
</comment>
<comment type="sequence caution" evidence="4">
    <conflict type="erroneous initiation">
        <sequence resource="EMBL-CDS" id="AAV86367"/>
    </conflict>
</comment>
<keyword id="KW-0963">Cytoplasm</keyword>
<keyword id="KW-0255">Endonuclease</keyword>
<keyword id="KW-0378">Hydrolase</keyword>
<keyword id="KW-0464">Manganese</keyword>
<keyword id="KW-0479">Metal-binding</keyword>
<keyword id="KW-0540">Nuclease</keyword>